<keyword id="KW-0067">ATP-binding</keyword>
<keyword id="KW-0436">Ligase</keyword>
<keyword id="KW-0547">Nucleotide-binding</keyword>
<keyword id="KW-0648">Protein biosynthesis</keyword>
<sequence>MAIDAATVRKVARLARIATPEDRLEPLAQELNGIMTWIEQLAQVDTDGVEPLTSVVHAGLPLREDVVTMGGDADLITANAPKSTGGFFVVPKVVE</sequence>
<comment type="function">
    <text evidence="1">Allows the formation of correctly charged Asn-tRNA(Asn) or Gln-tRNA(Gln) through the transamidation of misacylated Asp-tRNA(Asn) or Glu-tRNA(Gln) in organisms which lack either or both of asparaginyl-tRNA or glutaminyl-tRNA synthetases. The reaction takes place in the presence of glutamine and ATP through an activated phospho-Asp-tRNA(Asn) or phospho-Glu-tRNA(Gln).</text>
</comment>
<comment type="catalytic activity">
    <reaction evidence="1">
        <text>L-glutamyl-tRNA(Gln) + L-glutamine + ATP + H2O = L-glutaminyl-tRNA(Gln) + L-glutamate + ADP + phosphate + H(+)</text>
        <dbReference type="Rhea" id="RHEA:17521"/>
        <dbReference type="Rhea" id="RHEA-COMP:9681"/>
        <dbReference type="Rhea" id="RHEA-COMP:9684"/>
        <dbReference type="ChEBI" id="CHEBI:15377"/>
        <dbReference type="ChEBI" id="CHEBI:15378"/>
        <dbReference type="ChEBI" id="CHEBI:29985"/>
        <dbReference type="ChEBI" id="CHEBI:30616"/>
        <dbReference type="ChEBI" id="CHEBI:43474"/>
        <dbReference type="ChEBI" id="CHEBI:58359"/>
        <dbReference type="ChEBI" id="CHEBI:78520"/>
        <dbReference type="ChEBI" id="CHEBI:78521"/>
        <dbReference type="ChEBI" id="CHEBI:456216"/>
    </reaction>
</comment>
<comment type="catalytic activity">
    <reaction evidence="1">
        <text>L-aspartyl-tRNA(Asn) + L-glutamine + ATP + H2O = L-asparaginyl-tRNA(Asn) + L-glutamate + ADP + phosphate + 2 H(+)</text>
        <dbReference type="Rhea" id="RHEA:14513"/>
        <dbReference type="Rhea" id="RHEA-COMP:9674"/>
        <dbReference type="Rhea" id="RHEA-COMP:9677"/>
        <dbReference type="ChEBI" id="CHEBI:15377"/>
        <dbReference type="ChEBI" id="CHEBI:15378"/>
        <dbReference type="ChEBI" id="CHEBI:29985"/>
        <dbReference type="ChEBI" id="CHEBI:30616"/>
        <dbReference type="ChEBI" id="CHEBI:43474"/>
        <dbReference type="ChEBI" id="CHEBI:58359"/>
        <dbReference type="ChEBI" id="CHEBI:78515"/>
        <dbReference type="ChEBI" id="CHEBI:78516"/>
        <dbReference type="ChEBI" id="CHEBI:456216"/>
    </reaction>
</comment>
<comment type="subunit">
    <text evidence="1">Heterotrimer of A, B and C subunits.</text>
</comment>
<comment type="similarity">
    <text evidence="1">Belongs to the GatC family.</text>
</comment>
<feature type="chain" id="PRO_1000076178" description="Aspartyl/glutamyl-tRNA(Asn/Gln) amidotransferase subunit C">
    <location>
        <begin position="1"/>
        <end position="95"/>
    </location>
</feature>
<reference key="1">
    <citation type="submission" date="2008-01" db="EMBL/GenBank/DDBJ databases">
        <title>Complete sequence of chromosome of Caulobacter sp. K31.</title>
        <authorList>
            <consortium name="US DOE Joint Genome Institute"/>
            <person name="Copeland A."/>
            <person name="Lucas S."/>
            <person name="Lapidus A."/>
            <person name="Barry K."/>
            <person name="Glavina del Rio T."/>
            <person name="Dalin E."/>
            <person name="Tice H."/>
            <person name="Pitluck S."/>
            <person name="Bruce D."/>
            <person name="Goodwin L."/>
            <person name="Thompson L.S."/>
            <person name="Brettin T."/>
            <person name="Detter J.C."/>
            <person name="Han C."/>
            <person name="Schmutz J."/>
            <person name="Larimer F."/>
            <person name="Land M."/>
            <person name="Hauser L."/>
            <person name="Kyrpides N."/>
            <person name="Kim E."/>
            <person name="Stephens C."/>
            <person name="Richardson P."/>
        </authorList>
    </citation>
    <scope>NUCLEOTIDE SEQUENCE [LARGE SCALE GENOMIC DNA]</scope>
    <source>
        <strain>K31</strain>
    </source>
</reference>
<gene>
    <name evidence="1" type="primary">gatC</name>
    <name type="ordered locus">Caul_1519</name>
</gene>
<evidence type="ECO:0000255" key="1">
    <source>
        <dbReference type="HAMAP-Rule" id="MF_00122"/>
    </source>
</evidence>
<proteinExistence type="inferred from homology"/>
<protein>
    <recommendedName>
        <fullName evidence="1">Aspartyl/glutamyl-tRNA(Asn/Gln) amidotransferase subunit C</fullName>
        <shortName evidence="1">Asp/Glu-ADT subunit C</shortName>
        <ecNumber evidence="1">6.3.5.-</ecNumber>
    </recommendedName>
</protein>
<dbReference type="EC" id="6.3.5.-" evidence="1"/>
<dbReference type="EMBL" id="CP000927">
    <property type="protein sequence ID" value="ABZ70649.1"/>
    <property type="molecule type" value="Genomic_DNA"/>
</dbReference>
<dbReference type="SMR" id="B0T192"/>
<dbReference type="STRING" id="366602.Caul_1519"/>
<dbReference type="KEGG" id="cak:Caul_1519"/>
<dbReference type="eggNOG" id="COG0721">
    <property type="taxonomic scope" value="Bacteria"/>
</dbReference>
<dbReference type="HOGENOM" id="CLU_105899_2_0_5"/>
<dbReference type="OrthoDB" id="9794326at2"/>
<dbReference type="GO" id="GO:0050566">
    <property type="term" value="F:asparaginyl-tRNA synthase (glutamine-hydrolyzing) activity"/>
    <property type="evidence" value="ECO:0007669"/>
    <property type="project" value="RHEA"/>
</dbReference>
<dbReference type="GO" id="GO:0005524">
    <property type="term" value="F:ATP binding"/>
    <property type="evidence" value="ECO:0007669"/>
    <property type="project" value="UniProtKB-KW"/>
</dbReference>
<dbReference type="GO" id="GO:0050567">
    <property type="term" value="F:glutaminyl-tRNA synthase (glutamine-hydrolyzing) activity"/>
    <property type="evidence" value="ECO:0007669"/>
    <property type="project" value="UniProtKB-UniRule"/>
</dbReference>
<dbReference type="GO" id="GO:0070681">
    <property type="term" value="P:glutaminyl-tRNAGln biosynthesis via transamidation"/>
    <property type="evidence" value="ECO:0007669"/>
    <property type="project" value="TreeGrafter"/>
</dbReference>
<dbReference type="GO" id="GO:0006450">
    <property type="term" value="P:regulation of translational fidelity"/>
    <property type="evidence" value="ECO:0007669"/>
    <property type="project" value="InterPro"/>
</dbReference>
<dbReference type="GO" id="GO:0006412">
    <property type="term" value="P:translation"/>
    <property type="evidence" value="ECO:0007669"/>
    <property type="project" value="UniProtKB-UniRule"/>
</dbReference>
<dbReference type="Gene3D" id="1.10.20.60">
    <property type="entry name" value="Glu-tRNAGln amidotransferase C subunit, N-terminal domain"/>
    <property type="match status" value="1"/>
</dbReference>
<dbReference type="HAMAP" id="MF_00122">
    <property type="entry name" value="GatC"/>
    <property type="match status" value="1"/>
</dbReference>
<dbReference type="InterPro" id="IPR036113">
    <property type="entry name" value="Asp/Glu-ADT_sf_sub_c"/>
</dbReference>
<dbReference type="InterPro" id="IPR003837">
    <property type="entry name" value="GatC"/>
</dbReference>
<dbReference type="NCBIfam" id="TIGR00135">
    <property type="entry name" value="gatC"/>
    <property type="match status" value="1"/>
</dbReference>
<dbReference type="PANTHER" id="PTHR15004">
    <property type="entry name" value="GLUTAMYL-TRNA(GLN) AMIDOTRANSFERASE SUBUNIT C, MITOCHONDRIAL"/>
    <property type="match status" value="1"/>
</dbReference>
<dbReference type="PANTHER" id="PTHR15004:SF0">
    <property type="entry name" value="GLUTAMYL-TRNA(GLN) AMIDOTRANSFERASE SUBUNIT C, MITOCHONDRIAL"/>
    <property type="match status" value="1"/>
</dbReference>
<dbReference type="Pfam" id="PF02686">
    <property type="entry name" value="GatC"/>
    <property type="match status" value="1"/>
</dbReference>
<dbReference type="SUPFAM" id="SSF141000">
    <property type="entry name" value="Glu-tRNAGln amidotransferase C subunit"/>
    <property type="match status" value="1"/>
</dbReference>
<name>GATC_CAUSK</name>
<organism>
    <name type="scientific">Caulobacter sp. (strain K31)</name>
    <dbReference type="NCBI Taxonomy" id="366602"/>
    <lineage>
        <taxon>Bacteria</taxon>
        <taxon>Pseudomonadati</taxon>
        <taxon>Pseudomonadota</taxon>
        <taxon>Alphaproteobacteria</taxon>
        <taxon>Caulobacterales</taxon>
        <taxon>Caulobacteraceae</taxon>
        <taxon>Caulobacter</taxon>
    </lineage>
</organism>
<accession>B0T192</accession>